<name>Y2140_SACS2</name>
<gene>
    <name type="ordered locus">SSO2140</name>
    <name type="ORF">C01_016</name>
</gene>
<evidence type="ECO:0000305" key="1"/>
<dbReference type="EC" id="3.1.2.-"/>
<dbReference type="EMBL" id="Y08256">
    <property type="protein sequence ID" value="CAA69466.1"/>
    <property type="molecule type" value="Genomic_DNA"/>
</dbReference>
<dbReference type="EMBL" id="AE006641">
    <property type="protein sequence ID" value="AAK42318.1"/>
    <property type="molecule type" value="Genomic_DNA"/>
</dbReference>
<dbReference type="PIR" id="S74052">
    <property type="entry name" value="S74052"/>
</dbReference>
<dbReference type="RefSeq" id="WP_009988336.1">
    <property type="nucleotide sequence ID" value="NC_002754.1"/>
</dbReference>
<dbReference type="SMR" id="P95914"/>
<dbReference type="FunCoup" id="P95914">
    <property type="interactions" value="62"/>
</dbReference>
<dbReference type="STRING" id="273057.SSO2140"/>
<dbReference type="PaxDb" id="273057-SSO2140"/>
<dbReference type="EnsemblBacteria" id="AAK42318">
    <property type="protein sequence ID" value="AAK42318"/>
    <property type="gene ID" value="SSO2140"/>
</dbReference>
<dbReference type="KEGG" id="sso:SSO2140"/>
<dbReference type="PATRIC" id="fig|273057.12.peg.2233"/>
<dbReference type="eggNOG" id="arCOG00777">
    <property type="taxonomic scope" value="Archaea"/>
</dbReference>
<dbReference type="HOGENOM" id="CLU_089876_3_3_2"/>
<dbReference type="InParanoid" id="P95914"/>
<dbReference type="PhylomeDB" id="P95914"/>
<dbReference type="Proteomes" id="UP000001974">
    <property type="component" value="Chromosome"/>
</dbReference>
<dbReference type="GO" id="GO:0047617">
    <property type="term" value="F:fatty acyl-CoA hydrolase activity"/>
    <property type="evidence" value="ECO:0000318"/>
    <property type="project" value="GO_Central"/>
</dbReference>
<dbReference type="CDD" id="cd03443">
    <property type="entry name" value="PaaI_thioesterase"/>
    <property type="match status" value="1"/>
</dbReference>
<dbReference type="FunFam" id="3.10.129.10:FF:000113">
    <property type="entry name" value="Thioesterase superfamily protein"/>
    <property type="match status" value="1"/>
</dbReference>
<dbReference type="Gene3D" id="3.10.129.10">
    <property type="entry name" value="Hotdog Thioesterase"/>
    <property type="match status" value="1"/>
</dbReference>
<dbReference type="InterPro" id="IPR039298">
    <property type="entry name" value="ACOT13"/>
</dbReference>
<dbReference type="InterPro" id="IPR029069">
    <property type="entry name" value="HotDog_dom_sf"/>
</dbReference>
<dbReference type="InterPro" id="IPR003736">
    <property type="entry name" value="PAAI_dom"/>
</dbReference>
<dbReference type="InterPro" id="IPR006683">
    <property type="entry name" value="Thioestr_dom"/>
</dbReference>
<dbReference type="NCBIfam" id="TIGR00369">
    <property type="entry name" value="unchar_dom_1"/>
    <property type="match status" value="1"/>
</dbReference>
<dbReference type="PANTHER" id="PTHR21660:SF1">
    <property type="entry name" value="ACYL-COENZYME A THIOESTERASE 13"/>
    <property type="match status" value="1"/>
</dbReference>
<dbReference type="PANTHER" id="PTHR21660">
    <property type="entry name" value="THIOESTERASE SUPERFAMILY MEMBER-RELATED"/>
    <property type="match status" value="1"/>
</dbReference>
<dbReference type="Pfam" id="PF03061">
    <property type="entry name" value="4HBT"/>
    <property type="match status" value="1"/>
</dbReference>
<dbReference type="SUPFAM" id="SSF54637">
    <property type="entry name" value="Thioesterase/thiol ester dehydrase-isomerase"/>
    <property type="match status" value="1"/>
</dbReference>
<accession>P95914</accession>
<feature type="chain" id="PRO_0000156692" description="Putative esterase SSO2140">
    <location>
        <begin position="1"/>
        <end position="140"/>
    </location>
</feature>
<comment type="similarity">
    <text evidence="1">Belongs to the thioesterase PaaI family.</text>
</comment>
<keyword id="KW-0378">Hydrolase</keyword>
<keyword id="KW-1185">Reference proteome</keyword>
<reference key="1">
    <citation type="journal article" date="1996" name="Mol. Microbiol.">
        <title>Organizational characteristics and information content of an archaeal genome: 156 kb of sequence from Sulfolobus solfataricus P2.</title>
        <authorList>
            <person name="Sensen C.W."/>
            <person name="Klenk H.-P."/>
            <person name="Singh R.K."/>
            <person name="Allard G."/>
            <person name="Chan C.C.-Y."/>
            <person name="Liu Q.Y."/>
            <person name="Penny S.L."/>
            <person name="Young F."/>
            <person name="Schenk M.E."/>
            <person name="Gaasterland T."/>
            <person name="Doolittle W.F."/>
            <person name="Ragan M.A."/>
            <person name="Charlebois R.L."/>
        </authorList>
    </citation>
    <scope>NUCLEOTIDE SEQUENCE [GENOMIC DNA]</scope>
    <source>
        <strain>ATCC 35092 / DSM 1617 / JCM 11322 / P2</strain>
    </source>
</reference>
<reference key="2">
    <citation type="journal article" date="2001" name="Proc. Natl. Acad. Sci. U.S.A.">
        <title>The complete genome of the crenarchaeon Sulfolobus solfataricus P2.</title>
        <authorList>
            <person name="She Q."/>
            <person name="Singh R.K."/>
            <person name="Confalonieri F."/>
            <person name="Zivanovic Y."/>
            <person name="Allard G."/>
            <person name="Awayez M.J."/>
            <person name="Chan-Weiher C.C.-Y."/>
            <person name="Clausen I.G."/>
            <person name="Curtis B.A."/>
            <person name="De Moors A."/>
            <person name="Erauso G."/>
            <person name="Fletcher C."/>
            <person name="Gordon P.M.K."/>
            <person name="Heikamp-de Jong I."/>
            <person name="Jeffries A.C."/>
            <person name="Kozera C.J."/>
            <person name="Medina N."/>
            <person name="Peng X."/>
            <person name="Thi-Ngoc H.P."/>
            <person name="Redder P."/>
            <person name="Schenk M.E."/>
            <person name="Theriault C."/>
            <person name="Tolstrup N."/>
            <person name="Charlebois R.L."/>
            <person name="Doolittle W.F."/>
            <person name="Duguet M."/>
            <person name="Gaasterland T."/>
            <person name="Garrett R.A."/>
            <person name="Ragan M.A."/>
            <person name="Sensen C.W."/>
            <person name="Van der Oost J."/>
        </authorList>
    </citation>
    <scope>NUCLEOTIDE SEQUENCE [LARGE SCALE GENOMIC DNA]</scope>
    <source>
        <strain>ATCC 35092 / DSM 1617 / JCM 11322 / P2</strain>
    </source>
</reference>
<organism>
    <name type="scientific">Saccharolobus solfataricus (strain ATCC 35092 / DSM 1617 / JCM 11322 / P2)</name>
    <name type="common">Sulfolobus solfataricus</name>
    <dbReference type="NCBI Taxonomy" id="273057"/>
    <lineage>
        <taxon>Archaea</taxon>
        <taxon>Thermoproteota</taxon>
        <taxon>Thermoprotei</taxon>
        <taxon>Sulfolobales</taxon>
        <taxon>Sulfolobaceae</taxon>
        <taxon>Saccharolobus</taxon>
    </lineage>
</organism>
<protein>
    <recommendedName>
        <fullName>Putative esterase SSO2140</fullName>
        <ecNumber>3.1.2.-</ecNumber>
    </recommendedName>
</protein>
<proteinExistence type="inferred from homology"/>
<sequence length="140" mass="15555">MEDPIKAIEEIFKKADQIFKFLDVKVINLEKGRAVVEIPYKEEFTRRGGVLHGGIIMSAIDITGGLAALTVNDAMDQVTQELKINFLEPMYKGPFTIEGKVLRKGSTVIVVEIEFKDADGKLGAKAIGSWYILRTKVQAK</sequence>